<feature type="chain" id="PRO_1000202128" description="Cysteine--tRNA ligase">
    <location>
        <begin position="1"/>
        <end position="485"/>
    </location>
</feature>
<feature type="region of interest" description="Disordered" evidence="2">
    <location>
        <begin position="174"/>
        <end position="198"/>
    </location>
</feature>
<feature type="short sequence motif" description="'HIGH' region">
    <location>
        <begin position="31"/>
        <end position="41"/>
    </location>
</feature>
<feature type="short sequence motif" description="'KMSKS' region">
    <location>
        <begin position="283"/>
        <end position="287"/>
    </location>
</feature>
<feature type="compositionally biased region" description="Basic and acidic residues" evidence="2">
    <location>
        <begin position="185"/>
        <end position="197"/>
    </location>
</feature>
<feature type="binding site" evidence="1">
    <location>
        <position position="29"/>
    </location>
    <ligand>
        <name>Zn(2+)</name>
        <dbReference type="ChEBI" id="CHEBI:29105"/>
    </ligand>
</feature>
<feature type="binding site" evidence="1">
    <location>
        <position position="227"/>
    </location>
    <ligand>
        <name>Zn(2+)</name>
        <dbReference type="ChEBI" id="CHEBI:29105"/>
    </ligand>
</feature>
<feature type="binding site" evidence="1">
    <location>
        <position position="252"/>
    </location>
    <ligand>
        <name>Zn(2+)</name>
        <dbReference type="ChEBI" id="CHEBI:29105"/>
    </ligand>
</feature>
<feature type="binding site" evidence="1">
    <location>
        <position position="256"/>
    </location>
    <ligand>
        <name>Zn(2+)</name>
        <dbReference type="ChEBI" id="CHEBI:29105"/>
    </ligand>
</feature>
<feature type="binding site" evidence="1">
    <location>
        <position position="286"/>
    </location>
    <ligand>
        <name>ATP</name>
        <dbReference type="ChEBI" id="CHEBI:30616"/>
    </ligand>
</feature>
<organism>
    <name type="scientific">Micrococcus luteus (strain ATCC 4698 / DSM 20030 / JCM 1464 / CCM 169 / CCUG 5858 / IAM 1056 / NBRC 3333 / NCIMB 9278 / NCTC 2665 / VKM Ac-2230)</name>
    <name type="common">Micrococcus lysodeikticus</name>
    <dbReference type="NCBI Taxonomy" id="465515"/>
    <lineage>
        <taxon>Bacteria</taxon>
        <taxon>Bacillati</taxon>
        <taxon>Actinomycetota</taxon>
        <taxon>Actinomycetes</taxon>
        <taxon>Micrococcales</taxon>
        <taxon>Micrococcaceae</taxon>
        <taxon>Micrococcus</taxon>
    </lineage>
</organism>
<protein>
    <recommendedName>
        <fullName evidence="1">Cysteine--tRNA ligase</fullName>
        <ecNumber evidence="1">6.1.1.16</ecNumber>
    </recommendedName>
    <alternativeName>
        <fullName evidence="1">Cysteinyl-tRNA synthetase</fullName>
        <shortName evidence="1">CysRS</shortName>
    </alternativeName>
</protein>
<accession>C5C8X5</accession>
<keyword id="KW-0030">Aminoacyl-tRNA synthetase</keyword>
<keyword id="KW-0067">ATP-binding</keyword>
<keyword id="KW-0963">Cytoplasm</keyword>
<keyword id="KW-0436">Ligase</keyword>
<keyword id="KW-0479">Metal-binding</keyword>
<keyword id="KW-0547">Nucleotide-binding</keyword>
<keyword id="KW-0648">Protein biosynthesis</keyword>
<keyword id="KW-1185">Reference proteome</keyword>
<keyword id="KW-0862">Zinc</keyword>
<proteinExistence type="inferred from homology"/>
<sequence>MAQRFYDTRTAQIRDFEPLVPGEASVYYCGATVQGMPHVGHVRSAIVFDILIRWLEATGLRVTSVRNVTDIDDKILDRSAASHEAGFEASDLYPAREPWWALAYRFEKAFDAAYLALGVRRPTYEPRATGHVPEMFALIERLMERGHAYPAQDGSGDVYFDVRSWERYGELTRQRVEDMQDAPDADPRGKRDPHDFALWKGAKPGEPATAVWESPWGAGRPGWHLECSAMSTKYLGAEFDIHGGGLDLRFPHHENELAQSAAAGDGFARFWLHNGLVTYGGEKMSKSVGNTISPEEMLGMARPTAVRYFLGQAHYRSQLDYRPGALDEAEAVVERIEGFTARARAAGAVPPAPDGALADRVPAAFRTAMEDDLNVPQALAALHEAVRAGNSALAGQDLDAAAARLAEVEAMTAVLGLDDVPEGDDAAAGPVSDALDSLVRSQIEARAQARADKDWATADRIRDALAAAGVVVEDGADGATWRLAD</sequence>
<gene>
    <name evidence="1" type="primary">cysS</name>
    <name type="ordered locus">Mlut_03790</name>
</gene>
<reference key="1">
    <citation type="journal article" date="2010" name="J. Bacteriol.">
        <title>Genome sequence of the Fleming strain of Micrococcus luteus, a simple free-living actinobacterium.</title>
        <authorList>
            <person name="Young M."/>
            <person name="Artsatbanov V."/>
            <person name="Beller H.R."/>
            <person name="Chandra G."/>
            <person name="Chater K.F."/>
            <person name="Dover L.G."/>
            <person name="Goh E.B."/>
            <person name="Kahan T."/>
            <person name="Kaprelyants A.S."/>
            <person name="Kyrpides N."/>
            <person name="Lapidus A."/>
            <person name="Lowry S.R."/>
            <person name="Lykidis A."/>
            <person name="Mahillon J."/>
            <person name="Markowitz V."/>
            <person name="Mavromatis K."/>
            <person name="Mukamolova G.V."/>
            <person name="Oren A."/>
            <person name="Rokem J.S."/>
            <person name="Smith M.C."/>
            <person name="Young D.I."/>
            <person name="Greenblatt C.L."/>
        </authorList>
    </citation>
    <scope>NUCLEOTIDE SEQUENCE [LARGE SCALE GENOMIC DNA]</scope>
    <source>
        <strain>ATCC 4698 / DSM 20030 / JCM 1464 / CCM 169 / CCUG 5858 / IAM 1056 / NBRC 3333 / NCIMB 9278 / NCTC 2665 / VKM Ac-2230</strain>
    </source>
</reference>
<name>SYC_MICLC</name>
<comment type="catalytic activity">
    <reaction evidence="1">
        <text>tRNA(Cys) + L-cysteine + ATP = L-cysteinyl-tRNA(Cys) + AMP + diphosphate</text>
        <dbReference type="Rhea" id="RHEA:17773"/>
        <dbReference type="Rhea" id="RHEA-COMP:9661"/>
        <dbReference type="Rhea" id="RHEA-COMP:9679"/>
        <dbReference type="ChEBI" id="CHEBI:30616"/>
        <dbReference type="ChEBI" id="CHEBI:33019"/>
        <dbReference type="ChEBI" id="CHEBI:35235"/>
        <dbReference type="ChEBI" id="CHEBI:78442"/>
        <dbReference type="ChEBI" id="CHEBI:78517"/>
        <dbReference type="ChEBI" id="CHEBI:456215"/>
        <dbReference type="EC" id="6.1.1.16"/>
    </reaction>
</comment>
<comment type="cofactor">
    <cofactor evidence="1">
        <name>Zn(2+)</name>
        <dbReference type="ChEBI" id="CHEBI:29105"/>
    </cofactor>
    <text evidence="1">Binds 1 zinc ion per subunit.</text>
</comment>
<comment type="subunit">
    <text evidence="1">Monomer.</text>
</comment>
<comment type="subcellular location">
    <subcellularLocation>
        <location evidence="1">Cytoplasm</location>
    </subcellularLocation>
</comment>
<comment type="similarity">
    <text evidence="1">Belongs to the class-I aminoacyl-tRNA synthetase family.</text>
</comment>
<evidence type="ECO:0000255" key="1">
    <source>
        <dbReference type="HAMAP-Rule" id="MF_00041"/>
    </source>
</evidence>
<evidence type="ECO:0000256" key="2">
    <source>
        <dbReference type="SAM" id="MobiDB-lite"/>
    </source>
</evidence>
<dbReference type="EC" id="6.1.1.16" evidence="1"/>
<dbReference type="EMBL" id="CP001628">
    <property type="protein sequence ID" value="ACS29927.1"/>
    <property type="molecule type" value="Genomic_DNA"/>
</dbReference>
<dbReference type="RefSeq" id="WP_010079446.1">
    <property type="nucleotide sequence ID" value="NC_012803.1"/>
</dbReference>
<dbReference type="SMR" id="C5C8X5"/>
<dbReference type="STRING" id="465515.Mlut_03790"/>
<dbReference type="EnsemblBacteria" id="ACS29927">
    <property type="protein sequence ID" value="ACS29927"/>
    <property type="gene ID" value="Mlut_03790"/>
</dbReference>
<dbReference type="GeneID" id="93344558"/>
<dbReference type="KEGG" id="mlu:Mlut_03790"/>
<dbReference type="PATRIC" id="fig|465515.4.peg.357"/>
<dbReference type="eggNOG" id="COG0215">
    <property type="taxonomic scope" value="Bacteria"/>
</dbReference>
<dbReference type="HOGENOM" id="CLU_013528_0_1_11"/>
<dbReference type="Proteomes" id="UP000000738">
    <property type="component" value="Chromosome"/>
</dbReference>
<dbReference type="GO" id="GO:0005829">
    <property type="term" value="C:cytosol"/>
    <property type="evidence" value="ECO:0007669"/>
    <property type="project" value="TreeGrafter"/>
</dbReference>
<dbReference type="GO" id="GO:0005524">
    <property type="term" value="F:ATP binding"/>
    <property type="evidence" value="ECO:0007669"/>
    <property type="project" value="UniProtKB-UniRule"/>
</dbReference>
<dbReference type="GO" id="GO:0004817">
    <property type="term" value="F:cysteine-tRNA ligase activity"/>
    <property type="evidence" value="ECO:0007669"/>
    <property type="project" value="UniProtKB-UniRule"/>
</dbReference>
<dbReference type="GO" id="GO:0008270">
    <property type="term" value="F:zinc ion binding"/>
    <property type="evidence" value="ECO:0007669"/>
    <property type="project" value="UniProtKB-UniRule"/>
</dbReference>
<dbReference type="GO" id="GO:0006423">
    <property type="term" value="P:cysteinyl-tRNA aminoacylation"/>
    <property type="evidence" value="ECO:0007669"/>
    <property type="project" value="UniProtKB-UniRule"/>
</dbReference>
<dbReference type="CDD" id="cd00672">
    <property type="entry name" value="CysRS_core"/>
    <property type="match status" value="1"/>
</dbReference>
<dbReference type="FunFam" id="3.40.50.620:FF:000068">
    <property type="entry name" value="Cysteine--tRNA ligase"/>
    <property type="match status" value="1"/>
</dbReference>
<dbReference type="Gene3D" id="1.20.120.1910">
    <property type="entry name" value="Cysteine-tRNA ligase, C-terminal anti-codon recognition domain"/>
    <property type="match status" value="1"/>
</dbReference>
<dbReference type="Gene3D" id="3.40.50.620">
    <property type="entry name" value="HUPs"/>
    <property type="match status" value="1"/>
</dbReference>
<dbReference type="HAMAP" id="MF_00041">
    <property type="entry name" value="Cys_tRNA_synth"/>
    <property type="match status" value="1"/>
</dbReference>
<dbReference type="InterPro" id="IPR015803">
    <property type="entry name" value="Cys-tRNA-ligase"/>
</dbReference>
<dbReference type="InterPro" id="IPR015273">
    <property type="entry name" value="Cys-tRNA-synt_Ia_DALR"/>
</dbReference>
<dbReference type="InterPro" id="IPR024909">
    <property type="entry name" value="Cys-tRNA/MSH_ligase"/>
</dbReference>
<dbReference type="InterPro" id="IPR056411">
    <property type="entry name" value="CysS_C"/>
</dbReference>
<dbReference type="InterPro" id="IPR014729">
    <property type="entry name" value="Rossmann-like_a/b/a_fold"/>
</dbReference>
<dbReference type="InterPro" id="IPR032678">
    <property type="entry name" value="tRNA-synt_1_cat_dom"/>
</dbReference>
<dbReference type="InterPro" id="IPR009080">
    <property type="entry name" value="tRNAsynth_Ia_anticodon-bd"/>
</dbReference>
<dbReference type="NCBIfam" id="TIGR00435">
    <property type="entry name" value="cysS"/>
    <property type="match status" value="1"/>
</dbReference>
<dbReference type="PANTHER" id="PTHR10890:SF30">
    <property type="entry name" value="CYSTEINE--TRNA LIGASE"/>
    <property type="match status" value="1"/>
</dbReference>
<dbReference type="PANTHER" id="PTHR10890">
    <property type="entry name" value="CYSTEINYL-TRNA SYNTHETASE"/>
    <property type="match status" value="1"/>
</dbReference>
<dbReference type="Pfam" id="PF23493">
    <property type="entry name" value="CysS_C"/>
    <property type="match status" value="1"/>
</dbReference>
<dbReference type="Pfam" id="PF09190">
    <property type="entry name" value="DALR_2"/>
    <property type="match status" value="1"/>
</dbReference>
<dbReference type="Pfam" id="PF01406">
    <property type="entry name" value="tRNA-synt_1e"/>
    <property type="match status" value="1"/>
</dbReference>
<dbReference type="PRINTS" id="PR00983">
    <property type="entry name" value="TRNASYNTHCYS"/>
</dbReference>
<dbReference type="SMART" id="SM00840">
    <property type="entry name" value="DALR_2"/>
    <property type="match status" value="1"/>
</dbReference>
<dbReference type="SUPFAM" id="SSF47323">
    <property type="entry name" value="Anticodon-binding domain of a subclass of class I aminoacyl-tRNA synthetases"/>
    <property type="match status" value="1"/>
</dbReference>
<dbReference type="SUPFAM" id="SSF52374">
    <property type="entry name" value="Nucleotidylyl transferase"/>
    <property type="match status" value="1"/>
</dbReference>